<proteinExistence type="evidence at protein level"/>
<keyword id="KW-1003">Cell membrane</keyword>
<keyword id="KW-0175">Coiled coil</keyword>
<keyword id="KW-0963">Cytoplasm</keyword>
<keyword id="KW-0206">Cytoskeleton</keyword>
<keyword id="KW-0273">Eye lens protein</keyword>
<keyword id="KW-0403">Intermediate filament</keyword>
<keyword id="KW-0472">Membrane</keyword>
<keyword id="KW-0597">Phosphoprotein</keyword>
<keyword id="KW-1185">Reference proteome</keyword>
<keyword id="KW-0677">Repeat</keyword>
<feature type="chain" id="PRO_0000063849" description="Filensin">
    <location>
        <begin position="1"/>
        <end position="657"/>
    </location>
</feature>
<feature type="chain" id="PRO_0000448676" description="Filensin N-terminal fragment" evidence="2">
    <location>
        <begin position="1"/>
        <end position="432"/>
    </location>
</feature>
<feature type="chain" id="PRO_0000448677" description="Filensin C-terminal fragment" evidence="2">
    <location>
        <begin position="433"/>
        <end position="657"/>
    </location>
</feature>
<feature type="domain" description="IF rod" evidence="4">
    <location>
        <begin position="38"/>
        <end position="318"/>
    </location>
</feature>
<feature type="region of interest" description="Head">
    <location>
        <begin position="1"/>
        <end position="38"/>
    </location>
</feature>
<feature type="region of interest" description="Coil 1A">
    <location>
        <begin position="39"/>
        <end position="73"/>
    </location>
</feature>
<feature type="region of interest" description="Linker 1">
    <location>
        <begin position="74"/>
        <end position="82"/>
    </location>
</feature>
<feature type="region of interest" description="Coil 1B">
    <location>
        <begin position="83"/>
        <end position="182"/>
    </location>
</feature>
<feature type="region of interest" description="Linker 12">
    <location>
        <begin position="183"/>
        <end position="199"/>
    </location>
</feature>
<feature type="region of interest" description="Coil 2">
    <location>
        <begin position="200"/>
        <end position="318"/>
    </location>
</feature>
<feature type="region of interest" description="Tail">
    <location>
        <begin position="319"/>
        <end position="657"/>
    </location>
</feature>
<feature type="region of interest" description="Disordered" evidence="5">
    <location>
        <begin position="503"/>
        <end position="530"/>
    </location>
</feature>
<feature type="region of interest" description="Disordered" evidence="5">
    <location>
        <begin position="565"/>
        <end position="593"/>
    </location>
</feature>
<feature type="compositionally biased region" description="Basic and acidic residues" evidence="5">
    <location>
        <begin position="519"/>
        <end position="530"/>
    </location>
</feature>
<feature type="site" description="Cleavage (by CASP2, CASP3, and CASP7)" evidence="2">
    <location>
        <begin position="432"/>
        <end position="433"/>
    </location>
</feature>
<feature type="sequence variant">
    <original>H</original>
    <variation>R</variation>
    <location>
        <position position="122"/>
    </location>
</feature>
<feature type="sequence variant">
    <original>F</original>
    <variation>I</variation>
    <location>
        <position position="534"/>
    </location>
</feature>
<accession>Q06637</accession>
<comment type="function">
    <text evidence="3">Required for the correct formation of lens intermediate filaments.</text>
</comment>
<comment type="subcellular location">
    <subcellularLocation>
        <location evidence="2">Cell membrane</location>
        <topology evidence="2">Peripheral membrane protein</topology>
        <orientation evidence="2">Cytoplasmic side</orientation>
    </subcellularLocation>
    <subcellularLocation>
        <location evidence="1">Cytoplasm</location>
    </subcellularLocation>
    <subcellularLocation>
        <location evidence="2">Cytoplasm</location>
        <location evidence="2">Cytoskeleton</location>
    </subcellularLocation>
    <subcellularLocation>
        <location evidence="2">Cytoplasm</location>
        <location evidence="2">Cell cortex</location>
    </subcellularLocation>
</comment>
<comment type="tissue specificity">
    <text evidence="6">Detected in eye lens fiber cells (at protein level). Detected in embryonic eye lens.</text>
</comment>
<comment type="similarity">
    <text evidence="4">Belongs to the intermediate filament family.</text>
</comment>
<protein>
    <recommendedName>
        <fullName>Filensin</fullName>
    </recommendedName>
    <alternativeName>
        <fullName>Beaded filament structural protein 1</fullName>
    </alternativeName>
    <alternativeName>
        <fullName>Lens fiber cell beaded-filament structural protein CP 95</fullName>
        <shortName>CP95</shortName>
    </alternativeName>
    <component>
        <recommendedName>
            <fullName evidence="2">Filensin C-terminal fragment</fullName>
        </recommendedName>
    </component>
    <component>
        <recommendedName>
            <fullName evidence="2">Filensin N-terminal fragment</fullName>
        </recommendedName>
    </component>
</protein>
<organism>
    <name type="scientific">Gallus gallus</name>
    <name type="common">Chicken</name>
    <dbReference type="NCBI Taxonomy" id="9031"/>
    <lineage>
        <taxon>Eukaryota</taxon>
        <taxon>Metazoa</taxon>
        <taxon>Chordata</taxon>
        <taxon>Craniata</taxon>
        <taxon>Vertebrata</taxon>
        <taxon>Euteleostomi</taxon>
        <taxon>Archelosauria</taxon>
        <taxon>Archosauria</taxon>
        <taxon>Dinosauria</taxon>
        <taxon>Saurischia</taxon>
        <taxon>Theropoda</taxon>
        <taxon>Coelurosauria</taxon>
        <taxon>Aves</taxon>
        <taxon>Neognathae</taxon>
        <taxon>Galloanserae</taxon>
        <taxon>Galliformes</taxon>
        <taxon>Phasianidae</taxon>
        <taxon>Phasianinae</taxon>
        <taxon>Gallus</taxon>
    </lineage>
</organism>
<reference key="1">
    <citation type="journal article" date="1993" name="J. Cell Sci.">
        <title>Chicken filensin: a lens fiber cell protein that exhibits sequence similarity to intermediate filament proteins.</title>
        <authorList>
            <person name="Remington S.G."/>
        </authorList>
    </citation>
    <scope>NUCLEOTIDE SEQUENCE [MRNA]</scope>
    <scope>TISSUE SPECIFICITY</scope>
    <source>
        <strain>White leghorn</strain>
        <tissue>Lens</tissue>
    </source>
</reference>
<evidence type="ECO:0000250" key="1">
    <source>
        <dbReference type="UniProtKB" id="Q02435"/>
    </source>
</evidence>
<evidence type="ECO:0000250" key="2">
    <source>
        <dbReference type="UniProtKB" id="Q06002"/>
    </source>
</evidence>
<evidence type="ECO:0000250" key="3">
    <source>
        <dbReference type="UniProtKB" id="Q12934"/>
    </source>
</evidence>
<evidence type="ECO:0000255" key="4">
    <source>
        <dbReference type="PROSITE-ProRule" id="PRU01188"/>
    </source>
</evidence>
<evidence type="ECO:0000256" key="5">
    <source>
        <dbReference type="SAM" id="MobiDB-lite"/>
    </source>
</evidence>
<evidence type="ECO:0000269" key="6">
    <source>
    </source>
</evidence>
<dbReference type="EMBL" id="X72873">
    <property type="protein sequence ID" value="CAA51387.1"/>
    <property type="molecule type" value="mRNA"/>
</dbReference>
<dbReference type="PIR" id="S32739">
    <property type="entry name" value="S32739"/>
</dbReference>
<dbReference type="RefSeq" id="NP_990482.1">
    <property type="nucleotide sequence ID" value="NM_205151.2"/>
</dbReference>
<dbReference type="SMR" id="Q06637"/>
<dbReference type="FunCoup" id="Q06637">
    <property type="interactions" value="246"/>
</dbReference>
<dbReference type="STRING" id="9031.ENSGALP00000038611"/>
<dbReference type="PaxDb" id="9031-ENSGALP00000038611"/>
<dbReference type="Ensembl" id="ENSGALT00010043312.1">
    <property type="protein sequence ID" value="ENSGALP00010025742.1"/>
    <property type="gene ID" value="ENSGALG00010017915.1"/>
</dbReference>
<dbReference type="GeneID" id="396056"/>
<dbReference type="KEGG" id="gga:396056"/>
<dbReference type="CTD" id="631"/>
<dbReference type="VEuPathDB" id="HostDB:geneid_396056"/>
<dbReference type="eggNOG" id="ENOG502QRCH">
    <property type="taxonomic scope" value="Eukaryota"/>
</dbReference>
<dbReference type="GeneTree" id="ENSGT00390000016976"/>
<dbReference type="InParanoid" id="Q06637"/>
<dbReference type="OMA" id="IQTTPRV"/>
<dbReference type="OrthoDB" id="9942423at2759"/>
<dbReference type="PhylomeDB" id="Q06637"/>
<dbReference type="PRO" id="PR:Q06637"/>
<dbReference type="Proteomes" id="UP000000539">
    <property type="component" value="Chromosome 3"/>
</dbReference>
<dbReference type="GO" id="GO:0005938">
    <property type="term" value="C:cell cortex"/>
    <property type="evidence" value="ECO:0007669"/>
    <property type="project" value="UniProtKB-SubCell"/>
</dbReference>
<dbReference type="GO" id="GO:0005737">
    <property type="term" value="C:cytoplasm"/>
    <property type="evidence" value="ECO:0000318"/>
    <property type="project" value="GO_Central"/>
</dbReference>
<dbReference type="GO" id="GO:0005882">
    <property type="term" value="C:intermediate filament"/>
    <property type="evidence" value="ECO:0000318"/>
    <property type="project" value="GO_Central"/>
</dbReference>
<dbReference type="GO" id="GO:0005886">
    <property type="term" value="C:plasma membrane"/>
    <property type="evidence" value="ECO:0007669"/>
    <property type="project" value="UniProtKB-SubCell"/>
</dbReference>
<dbReference type="GO" id="GO:0005212">
    <property type="term" value="F:structural constituent of eye lens"/>
    <property type="evidence" value="ECO:0000318"/>
    <property type="project" value="GO_Central"/>
</dbReference>
<dbReference type="GO" id="GO:0070307">
    <property type="term" value="P:lens fiber cell development"/>
    <property type="evidence" value="ECO:0000318"/>
    <property type="project" value="GO_Central"/>
</dbReference>
<dbReference type="FunFam" id="1.20.5.1160:FF:000009">
    <property type="entry name" value="filensin isoform X2"/>
    <property type="match status" value="1"/>
</dbReference>
<dbReference type="Gene3D" id="1.20.5.170">
    <property type="match status" value="1"/>
</dbReference>
<dbReference type="Gene3D" id="1.20.5.1160">
    <property type="entry name" value="Vasodilator-stimulated phosphoprotein"/>
    <property type="match status" value="1"/>
</dbReference>
<dbReference type="InterPro" id="IPR042358">
    <property type="entry name" value="BFSP1"/>
</dbReference>
<dbReference type="InterPro" id="IPR039008">
    <property type="entry name" value="IF_rod_dom"/>
</dbReference>
<dbReference type="PANTHER" id="PTHR14069">
    <property type="entry name" value="FILENSIN"/>
    <property type="match status" value="1"/>
</dbReference>
<dbReference type="PANTHER" id="PTHR14069:SF0">
    <property type="entry name" value="FILENSIN"/>
    <property type="match status" value="1"/>
</dbReference>
<dbReference type="Pfam" id="PF00038">
    <property type="entry name" value="Filament"/>
    <property type="match status" value="1"/>
</dbReference>
<dbReference type="SMART" id="SM01391">
    <property type="entry name" value="Filament"/>
    <property type="match status" value="1"/>
</dbReference>
<dbReference type="SUPFAM" id="SSF64593">
    <property type="entry name" value="Intermediate filament protein, coiled coil region"/>
    <property type="match status" value="2"/>
</dbReference>
<dbReference type="PROSITE" id="PS51842">
    <property type="entry name" value="IF_ROD_2"/>
    <property type="match status" value="1"/>
</dbReference>
<gene>
    <name type="primary">BFSP1</name>
</gene>
<name>BFSP1_CHICK</name>
<sequence length="657" mass="76105">MYRSSFLREVRKEKYERSDAYDELRGSPEFDSLAQAQGLENLQELNERFASYINRARVLEQRNTILRKQLETFQRMDELVGLDEAFAGQIEFNRQRMRELASDRAKLEREEKDAQRMLDEYHNKYRNEREYQQKLKETLERLNKEADEALLCNLELQIESQFLQDDINATKDRYKKNLMEIQTYVNILQQIIQTTPRVSPITTGISEEKLVAERRIPVLQSQLEEYKSILCQLQAQKYKLQTETTMLEQAIKNTQESYDDEIQLYNEQIENLRKGIEEAERTLEKYTTDCRQLVIYQQSLENELERYKRIIENEDSRLNSAIAGTPVTLFTQIYRPVQPQASRGRDITQAMQEIASVKPRQKALTKKLSRKKEIMSKDITDGLSPEKLYERTVEVFDQDQLEFRHEGSVTCEPGQEELELVEKEAVPEDVPDGAQISKAFDKLCNLVKEKIRVYKRPEAKVDSHPKGRYVLVTGEEGYEEPCFSSIPAGGGITVSTSNGKVTIGGDVEPIPELPEPSEPSEKEKRDICERRDEFETQDKLKEEEKEDLFEWGKIRGKIEQVTKYPDVSEPEAVPSPGLISPAEPGVLQETDHDREDKQGLLFREAGLPGSVSYEKVEVVESIEKFSDDRIQTYEETAMIVETMIEKTSKKKPGDKGS</sequence>